<evidence type="ECO:0000255" key="1">
    <source>
        <dbReference type="HAMAP-Rule" id="MF_00296"/>
    </source>
</evidence>
<feature type="chain" id="PRO_0000427747" description="Homoserine O-acetyltransferase">
    <location>
        <begin position="1"/>
        <end position="379"/>
    </location>
</feature>
<feature type="domain" description="AB hydrolase-1" evidence="1">
    <location>
        <begin position="52"/>
        <end position="356"/>
    </location>
</feature>
<feature type="active site" description="Nucleophile" evidence="1">
    <location>
        <position position="157"/>
    </location>
</feature>
<feature type="active site" evidence="1">
    <location>
        <position position="320"/>
    </location>
</feature>
<feature type="active site" evidence="1">
    <location>
        <position position="350"/>
    </location>
</feature>
<feature type="binding site" evidence="1">
    <location>
        <position position="227"/>
    </location>
    <ligand>
        <name>substrate</name>
    </ligand>
</feature>
<feature type="binding site" evidence="1">
    <location>
        <position position="351"/>
    </location>
    <ligand>
        <name>substrate</name>
    </ligand>
</feature>
<proteinExistence type="inferred from homology"/>
<name>METXA_MYCTO</name>
<keyword id="KW-0012">Acyltransferase</keyword>
<keyword id="KW-0028">Amino-acid biosynthesis</keyword>
<keyword id="KW-0963">Cytoplasm</keyword>
<keyword id="KW-0486">Methionine biosynthesis</keyword>
<keyword id="KW-1185">Reference proteome</keyword>
<keyword id="KW-0808">Transferase</keyword>
<comment type="function">
    <text evidence="1">Transfers an acetyl group from acetyl-CoA to L-homoserine, forming acetyl-L-homoserine.</text>
</comment>
<comment type="catalytic activity">
    <reaction evidence="1">
        <text>L-homoserine + acetyl-CoA = O-acetyl-L-homoserine + CoA</text>
        <dbReference type="Rhea" id="RHEA:13701"/>
        <dbReference type="ChEBI" id="CHEBI:57287"/>
        <dbReference type="ChEBI" id="CHEBI:57288"/>
        <dbReference type="ChEBI" id="CHEBI:57476"/>
        <dbReference type="ChEBI" id="CHEBI:57716"/>
        <dbReference type="EC" id="2.3.1.31"/>
    </reaction>
</comment>
<comment type="pathway">
    <text evidence="1">Amino-acid biosynthesis; L-methionine biosynthesis via de novo pathway; O-acetyl-L-homoserine from L-homoserine: step 1/1.</text>
</comment>
<comment type="subunit">
    <text evidence="1">Homodimer.</text>
</comment>
<comment type="subcellular location">
    <subcellularLocation>
        <location evidence="1">Cytoplasm</location>
    </subcellularLocation>
</comment>
<comment type="similarity">
    <text evidence="1">Belongs to the AB hydrolase superfamily. MetX family.</text>
</comment>
<reference key="1">
    <citation type="journal article" date="2002" name="J. Bacteriol.">
        <title>Whole-genome comparison of Mycobacterium tuberculosis clinical and laboratory strains.</title>
        <authorList>
            <person name="Fleischmann R.D."/>
            <person name="Alland D."/>
            <person name="Eisen J.A."/>
            <person name="Carpenter L."/>
            <person name="White O."/>
            <person name="Peterson J.D."/>
            <person name="DeBoy R.T."/>
            <person name="Dodson R.J."/>
            <person name="Gwinn M.L."/>
            <person name="Haft D.H."/>
            <person name="Hickey E.K."/>
            <person name="Kolonay J.F."/>
            <person name="Nelson W.C."/>
            <person name="Umayam L.A."/>
            <person name="Ermolaeva M.D."/>
            <person name="Salzberg S.L."/>
            <person name="Delcher A."/>
            <person name="Utterback T.R."/>
            <person name="Weidman J.F."/>
            <person name="Khouri H.M."/>
            <person name="Gill J."/>
            <person name="Mikula A."/>
            <person name="Bishai W."/>
            <person name="Jacobs W.R. Jr."/>
            <person name="Venter J.C."/>
            <person name="Fraser C.M."/>
        </authorList>
    </citation>
    <scope>NUCLEOTIDE SEQUENCE [LARGE SCALE GENOMIC DNA]</scope>
    <source>
        <strain>CDC 1551 / Oshkosh</strain>
    </source>
</reference>
<organism>
    <name type="scientific">Mycobacterium tuberculosis (strain CDC 1551 / Oshkosh)</name>
    <dbReference type="NCBI Taxonomy" id="83331"/>
    <lineage>
        <taxon>Bacteria</taxon>
        <taxon>Bacillati</taxon>
        <taxon>Actinomycetota</taxon>
        <taxon>Actinomycetes</taxon>
        <taxon>Mycobacteriales</taxon>
        <taxon>Mycobacteriaceae</taxon>
        <taxon>Mycobacterium</taxon>
        <taxon>Mycobacterium tuberculosis complex</taxon>
    </lineage>
</organism>
<protein>
    <recommendedName>
        <fullName evidence="1">Homoserine O-acetyltransferase</fullName>
        <shortName evidence="1">HAT</shortName>
        <ecNumber evidence="1">2.3.1.31</ecNumber>
    </recommendedName>
    <alternativeName>
        <fullName evidence="1">Homoserine transacetylase</fullName>
        <shortName evidence="1">HTA</shortName>
    </alternativeName>
</protein>
<accession>P9WJY8</accession>
<accession>L0TDV2</accession>
<accession>O53391</accession>
<accession>P0A5J8</accession>
<dbReference type="EC" id="2.3.1.31" evidence="1"/>
<dbReference type="EMBL" id="AE000516">
    <property type="protein sequence ID" value="AAK47788.1"/>
    <property type="molecule type" value="Genomic_DNA"/>
</dbReference>
<dbReference type="PIR" id="D70846">
    <property type="entry name" value="D70846"/>
</dbReference>
<dbReference type="SMR" id="P9WJY8"/>
<dbReference type="ESTHER" id="myctu-metx">
    <property type="family name" value="Homoserine_transacetylase"/>
</dbReference>
<dbReference type="KEGG" id="mtc:MT3444"/>
<dbReference type="PATRIC" id="fig|83331.31.peg.3705"/>
<dbReference type="HOGENOM" id="CLU_028760_1_0_11"/>
<dbReference type="UniPathway" id="UPA00051">
    <property type="reaction ID" value="UER00074"/>
</dbReference>
<dbReference type="Proteomes" id="UP000001020">
    <property type="component" value="Chromosome"/>
</dbReference>
<dbReference type="GO" id="GO:0005737">
    <property type="term" value="C:cytoplasm"/>
    <property type="evidence" value="ECO:0007669"/>
    <property type="project" value="UniProtKB-SubCell"/>
</dbReference>
<dbReference type="GO" id="GO:0004414">
    <property type="term" value="F:homoserine O-acetyltransferase activity"/>
    <property type="evidence" value="ECO:0007669"/>
    <property type="project" value="UniProtKB-UniRule"/>
</dbReference>
<dbReference type="GO" id="GO:0009092">
    <property type="term" value="P:homoserine metabolic process"/>
    <property type="evidence" value="ECO:0007669"/>
    <property type="project" value="TreeGrafter"/>
</dbReference>
<dbReference type="GO" id="GO:0009086">
    <property type="term" value="P:methionine biosynthetic process"/>
    <property type="evidence" value="ECO:0007669"/>
    <property type="project" value="UniProtKB-UniRule"/>
</dbReference>
<dbReference type="Gene3D" id="3.40.50.1820">
    <property type="entry name" value="alpha/beta hydrolase"/>
    <property type="match status" value="1"/>
</dbReference>
<dbReference type="HAMAP" id="MF_00296">
    <property type="entry name" value="MetX_acyltransf"/>
    <property type="match status" value="1"/>
</dbReference>
<dbReference type="InterPro" id="IPR000073">
    <property type="entry name" value="AB_hydrolase_1"/>
</dbReference>
<dbReference type="InterPro" id="IPR029058">
    <property type="entry name" value="AB_hydrolase_fold"/>
</dbReference>
<dbReference type="InterPro" id="IPR008220">
    <property type="entry name" value="HAT_MetX-like"/>
</dbReference>
<dbReference type="NCBIfam" id="TIGR01392">
    <property type="entry name" value="homoserO_Ac_trn"/>
    <property type="match status" value="1"/>
</dbReference>
<dbReference type="NCBIfam" id="NF001209">
    <property type="entry name" value="PRK00175.1"/>
    <property type="match status" value="1"/>
</dbReference>
<dbReference type="PANTHER" id="PTHR32268">
    <property type="entry name" value="HOMOSERINE O-ACETYLTRANSFERASE"/>
    <property type="match status" value="1"/>
</dbReference>
<dbReference type="PANTHER" id="PTHR32268:SF11">
    <property type="entry name" value="HOMOSERINE O-ACETYLTRANSFERASE"/>
    <property type="match status" value="1"/>
</dbReference>
<dbReference type="Pfam" id="PF00561">
    <property type="entry name" value="Abhydrolase_1"/>
    <property type="match status" value="1"/>
</dbReference>
<dbReference type="PIRSF" id="PIRSF000443">
    <property type="entry name" value="Homoser_Ac_trans"/>
    <property type="match status" value="1"/>
</dbReference>
<dbReference type="SUPFAM" id="SSF53474">
    <property type="entry name" value="alpha/beta-Hydrolases"/>
    <property type="match status" value="1"/>
</dbReference>
<gene>
    <name evidence="1" type="primary">metXA</name>
    <name type="synonym">metA</name>
    <name type="ordered locus">MT3444</name>
</gene>
<sequence length="379" mass="39799">MTISDVPTQTLPAEGEIGLIDVGSLQLESGAVIDDVCIAVQRWGKLSPARDNVVVVLHALTGDSHITGPAGPGHPTPGWWDGVAGPSAPIDTTRWCAVATNVLGGCRGSTGPSSLARDGKPWGSRFPLISIRDQVQADVAALAALGITEVAAVVGGSMGGARALEWVVGYPDRVRAGLLLAVGARATADQIGTQTTQIAAIKADPDWQSGDYHETGRAPDAGLRLARRFAHLTYRGEIELDTRFANHNQGNEDPTAGGRYAVQSYLEHQGDKLLSRFDAGSYVILTEALNSHDVGRGRGGVSAALRACPVPVVVGGITSDRLYPLRLQQELADLLPGCAGLRVVESVYGHDGFLVETEAVGELIRQTLGLADREGACRR</sequence>